<comment type="function">
    <text evidence="1">Phosphorolytic 3'-5' exoribonuclease that plays an important role in tRNA 3'-end maturation. Removes nucleotide residues following the 3'-CCA terminus of tRNAs; can also add nucleotides to the ends of RNA molecules by using nucleoside diphosphates as substrates, but this may not be physiologically important. Probably plays a role in initiation of 16S rRNA degradation (leading to ribosome degradation) during starvation.</text>
</comment>
<comment type="catalytic activity">
    <reaction evidence="1">
        <text>tRNA(n+1) + phosphate = tRNA(n) + a ribonucleoside 5'-diphosphate</text>
        <dbReference type="Rhea" id="RHEA:10628"/>
        <dbReference type="Rhea" id="RHEA-COMP:17343"/>
        <dbReference type="Rhea" id="RHEA-COMP:17344"/>
        <dbReference type="ChEBI" id="CHEBI:43474"/>
        <dbReference type="ChEBI" id="CHEBI:57930"/>
        <dbReference type="ChEBI" id="CHEBI:173114"/>
        <dbReference type="EC" id="2.7.7.56"/>
    </reaction>
</comment>
<comment type="subunit">
    <text evidence="1">Homohexameric ring arranged as a trimer of dimers.</text>
</comment>
<comment type="similarity">
    <text evidence="1">Belongs to the RNase PH family.</text>
</comment>
<gene>
    <name evidence="1" type="primary">rph</name>
    <name type="ordered locus">Psyr_0213</name>
</gene>
<protein>
    <recommendedName>
        <fullName evidence="1">Ribonuclease PH</fullName>
        <shortName evidence="1">RNase PH</shortName>
        <ecNumber evidence="1">2.7.7.56</ecNumber>
    </recommendedName>
    <alternativeName>
        <fullName evidence="1">tRNA nucleotidyltransferase</fullName>
    </alternativeName>
</protein>
<proteinExistence type="inferred from homology"/>
<organism>
    <name type="scientific">Pseudomonas syringae pv. syringae (strain B728a)</name>
    <dbReference type="NCBI Taxonomy" id="205918"/>
    <lineage>
        <taxon>Bacteria</taxon>
        <taxon>Pseudomonadati</taxon>
        <taxon>Pseudomonadota</taxon>
        <taxon>Gammaproteobacteria</taxon>
        <taxon>Pseudomonadales</taxon>
        <taxon>Pseudomonadaceae</taxon>
        <taxon>Pseudomonas</taxon>
        <taxon>Pseudomonas syringae</taxon>
    </lineage>
</organism>
<keyword id="KW-0548">Nucleotidyltransferase</keyword>
<keyword id="KW-0694">RNA-binding</keyword>
<keyword id="KW-0698">rRNA processing</keyword>
<keyword id="KW-0808">Transferase</keyword>
<keyword id="KW-0819">tRNA processing</keyword>
<keyword id="KW-0820">tRNA-binding</keyword>
<reference key="1">
    <citation type="journal article" date="2005" name="Proc. Natl. Acad. Sci. U.S.A.">
        <title>Comparison of the complete genome sequences of Pseudomonas syringae pv. syringae B728a and pv. tomato DC3000.</title>
        <authorList>
            <person name="Feil H."/>
            <person name="Feil W.S."/>
            <person name="Chain P."/>
            <person name="Larimer F."/>
            <person name="Dibartolo G."/>
            <person name="Copeland A."/>
            <person name="Lykidis A."/>
            <person name="Trong S."/>
            <person name="Nolan M."/>
            <person name="Goltsman E."/>
            <person name="Thiel J."/>
            <person name="Malfatti S."/>
            <person name="Loper J.E."/>
            <person name="Lapidus A."/>
            <person name="Detter J.C."/>
            <person name="Land M."/>
            <person name="Richardson P.M."/>
            <person name="Kyrpides N.C."/>
            <person name="Ivanova N."/>
            <person name="Lindow S.E."/>
        </authorList>
    </citation>
    <scope>NUCLEOTIDE SEQUENCE [LARGE SCALE GENOMIC DNA]</scope>
    <source>
        <strain>B728a</strain>
    </source>
</reference>
<dbReference type="EC" id="2.7.7.56" evidence="1"/>
<dbReference type="EMBL" id="CP000075">
    <property type="protein sequence ID" value="AAY35286.1"/>
    <property type="molecule type" value="Genomic_DNA"/>
</dbReference>
<dbReference type="RefSeq" id="WP_003313989.1">
    <property type="nucleotide sequence ID" value="NC_007005.1"/>
</dbReference>
<dbReference type="RefSeq" id="YP_233324.1">
    <property type="nucleotide sequence ID" value="NC_007005.1"/>
</dbReference>
<dbReference type="SMR" id="Q4ZZY6"/>
<dbReference type="STRING" id="205918.Psyr_0213"/>
<dbReference type="GeneID" id="96216551"/>
<dbReference type="KEGG" id="psb:Psyr_0213"/>
<dbReference type="PATRIC" id="fig|205918.7.peg.210"/>
<dbReference type="eggNOG" id="COG0689">
    <property type="taxonomic scope" value="Bacteria"/>
</dbReference>
<dbReference type="HOGENOM" id="CLU_050858_0_0_6"/>
<dbReference type="OrthoDB" id="9802265at2"/>
<dbReference type="Proteomes" id="UP000000426">
    <property type="component" value="Chromosome"/>
</dbReference>
<dbReference type="GO" id="GO:0000175">
    <property type="term" value="F:3'-5'-RNA exonuclease activity"/>
    <property type="evidence" value="ECO:0007669"/>
    <property type="project" value="UniProtKB-UniRule"/>
</dbReference>
<dbReference type="GO" id="GO:0000049">
    <property type="term" value="F:tRNA binding"/>
    <property type="evidence" value="ECO:0007669"/>
    <property type="project" value="UniProtKB-UniRule"/>
</dbReference>
<dbReference type="GO" id="GO:0009022">
    <property type="term" value="F:tRNA nucleotidyltransferase activity"/>
    <property type="evidence" value="ECO:0007669"/>
    <property type="project" value="UniProtKB-UniRule"/>
</dbReference>
<dbReference type="GO" id="GO:0016075">
    <property type="term" value="P:rRNA catabolic process"/>
    <property type="evidence" value="ECO:0007669"/>
    <property type="project" value="UniProtKB-UniRule"/>
</dbReference>
<dbReference type="GO" id="GO:0006364">
    <property type="term" value="P:rRNA processing"/>
    <property type="evidence" value="ECO:0007669"/>
    <property type="project" value="UniProtKB-KW"/>
</dbReference>
<dbReference type="GO" id="GO:0008033">
    <property type="term" value="P:tRNA processing"/>
    <property type="evidence" value="ECO:0007669"/>
    <property type="project" value="UniProtKB-UniRule"/>
</dbReference>
<dbReference type="CDD" id="cd11362">
    <property type="entry name" value="RNase_PH_bact"/>
    <property type="match status" value="1"/>
</dbReference>
<dbReference type="FunFam" id="3.30.230.70:FF:000003">
    <property type="entry name" value="Ribonuclease PH"/>
    <property type="match status" value="1"/>
</dbReference>
<dbReference type="Gene3D" id="3.30.230.70">
    <property type="entry name" value="GHMP Kinase, N-terminal domain"/>
    <property type="match status" value="1"/>
</dbReference>
<dbReference type="HAMAP" id="MF_00564">
    <property type="entry name" value="RNase_PH"/>
    <property type="match status" value="1"/>
</dbReference>
<dbReference type="InterPro" id="IPR001247">
    <property type="entry name" value="ExoRNase_PH_dom1"/>
</dbReference>
<dbReference type="InterPro" id="IPR015847">
    <property type="entry name" value="ExoRNase_PH_dom2"/>
</dbReference>
<dbReference type="InterPro" id="IPR036345">
    <property type="entry name" value="ExoRNase_PH_dom2_sf"/>
</dbReference>
<dbReference type="InterPro" id="IPR027408">
    <property type="entry name" value="PNPase/RNase_PH_dom_sf"/>
</dbReference>
<dbReference type="InterPro" id="IPR020568">
    <property type="entry name" value="Ribosomal_Su5_D2-typ_SF"/>
</dbReference>
<dbReference type="InterPro" id="IPR050080">
    <property type="entry name" value="RNase_PH"/>
</dbReference>
<dbReference type="InterPro" id="IPR002381">
    <property type="entry name" value="RNase_PH_bac-type"/>
</dbReference>
<dbReference type="InterPro" id="IPR018336">
    <property type="entry name" value="RNase_PH_CS"/>
</dbReference>
<dbReference type="NCBIfam" id="TIGR01966">
    <property type="entry name" value="RNasePH"/>
    <property type="match status" value="1"/>
</dbReference>
<dbReference type="PANTHER" id="PTHR11953">
    <property type="entry name" value="EXOSOME COMPLEX COMPONENT"/>
    <property type="match status" value="1"/>
</dbReference>
<dbReference type="PANTHER" id="PTHR11953:SF0">
    <property type="entry name" value="EXOSOME COMPLEX COMPONENT RRP41"/>
    <property type="match status" value="1"/>
</dbReference>
<dbReference type="Pfam" id="PF01138">
    <property type="entry name" value="RNase_PH"/>
    <property type="match status" value="1"/>
</dbReference>
<dbReference type="Pfam" id="PF03725">
    <property type="entry name" value="RNase_PH_C"/>
    <property type="match status" value="1"/>
</dbReference>
<dbReference type="SUPFAM" id="SSF55666">
    <property type="entry name" value="Ribonuclease PH domain 2-like"/>
    <property type="match status" value="1"/>
</dbReference>
<dbReference type="SUPFAM" id="SSF54211">
    <property type="entry name" value="Ribosomal protein S5 domain 2-like"/>
    <property type="match status" value="1"/>
</dbReference>
<dbReference type="PROSITE" id="PS01277">
    <property type="entry name" value="RIBONUCLEASE_PH"/>
    <property type="match status" value="1"/>
</dbReference>
<accession>Q4ZZY6</accession>
<evidence type="ECO:0000255" key="1">
    <source>
        <dbReference type="HAMAP-Rule" id="MF_00564"/>
    </source>
</evidence>
<feature type="chain" id="PRO_1000024854" description="Ribonuclease PH">
    <location>
        <begin position="1"/>
        <end position="240"/>
    </location>
</feature>
<feature type="binding site" evidence="1">
    <location>
        <position position="87"/>
    </location>
    <ligand>
        <name>phosphate</name>
        <dbReference type="ChEBI" id="CHEBI:43474"/>
        <note>substrate</note>
    </ligand>
</feature>
<feature type="binding site" evidence="1">
    <location>
        <begin position="125"/>
        <end position="127"/>
    </location>
    <ligand>
        <name>phosphate</name>
        <dbReference type="ChEBI" id="CHEBI:43474"/>
        <note>substrate</note>
    </ligand>
</feature>
<name>RNPH_PSEU2</name>
<sequence length="240" mass="25703">MKRPSGRAADQLRSIRITRNYTKHAEGSVLVEFGDTKVICTVSVENGVPRFLKGQGQGWLTAEYGMLPRATGERNQREASRGKQGGRTLEIQRLIGRSLRAALDMSKLGDVTLYVDCDVIQADGGTRTASITGAMVALADALKVIKKRGGLKGGDPLKQMIAAVSVGMYQGEPVLDLDYLEDSAAETDLNVVMTSAGGFIEVQGTAEGAPFQPEELNAMLALAQKGMTELFELQRAALAD</sequence>